<dbReference type="EC" id="1.3.1.48" evidence="3"/>
<dbReference type="EMBL" id="AK036168">
    <property type="protein sequence ID" value="BAC29329.1"/>
    <property type="molecule type" value="mRNA"/>
</dbReference>
<dbReference type="EMBL" id="AK021033">
    <property type="protein sequence ID" value="BAB32284.1"/>
    <property type="molecule type" value="mRNA"/>
</dbReference>
<dbReference type="EMBL" id="AK145232">
    <property type="protein sequence ID" value="BAE26315.1"/>
    <property type="molecule type" value="mRNA"/>
</dbReference>
<dbReference type="EMBL" id="AK159932">
    <property type="protein sequence ID" value="BAE35493.1"/>
    <property type="molecule type" value="mRNA"/>
</dbReference>
<dbReference type="EMBL" id="AK168895">
    <property type="protein sequence ID" value="BAE40712.1"/>
    <property type="molecule type" value="mRNA"/>
</dbReference>
<dbReference type="EMBL" id="BC021466">
    <property type="protein sequence ID" value="AAH21466.1"/>
    <property type="molecule type" value="mRNA"/>
</dbReference>
<dbReference type="CCDS" id="CCDS36490.1">
    <molecule id="Q8VDQ1-1"/>
</dbReference>
<dbReference type="RefSeq" id="NP_001239554.1">
    <molecule id="Q8VDQ1-1"/>
    <property type="nucleotide sequence ID" value="NM_001252625.1"/>
</dbReference>
<dbReference type="RefSeq" id="NP_001239555.1">
    <property type="nucleotide sequence ID" value="NM_001252626.1"/>
</dbReference>
<dbReference type="RefSeq" id="NP_084156.2">
    <molecule id="Q8VDQ1-1"/>
    <property type="nucleotide sequence ID" value="NM_029880.3"/>
</dbReference>
<dbReference type="PDB" id="1VJ1">
    <property type="method" value="X-ray"/>
    <property type="resolution" value="2.10 A"/>
    <property type="chains" value="A=1-351"/>
</dbReference>
<dbReference type="PDB" id="2ZB3">
    <property type="method" value="X-ray"/>
    <property type="resolution" value="2.00 A"/>
    <property type="chains" value="A=1-351"/>
</dbReference>
<dbReference type="PDBsum" id="1VJ1"/>
<dbReference type="PDBsum" id="2ZB3"/>
<dbReference type="SMR" id="Q8VDQ1"/>
<dbReference type="BioGRID" id="218562">
    <property type="interactions" value="2"/>
</dbReference>
<dbReference type="FunCoup" id="Q8VDQ1">
    <property type="interactions" value="2326"/>
</dbReference>
<dbReference type="IntAct" id="Q8VDQ1">
    <property type="interactions" value="2"/>
</dbReference>
<dbReference type="MINT" id="Q8VDQ1"/>
<dbReference type="STRING" id="10090.ENSMUSP00000115704"/>
<dbReference type="SwissLipids" id="SLP:000001623"/>
<dbReference type="GlyGen" id="Q8VDQ1">
    <property type="glycosylation" value="4 sites, 1 N-linked glycan (1 site), 1 O-linked glycan (3 sites)"/>
</dbReference>
<dbReference type="iPTMnet" id="Q8VDQ1"/>
<dbReference type="PhosphoSitePlus" id="Q8VDQ1"/>
<dbReference type="SwissPalm" id="Q8VDQ1"/>
<dbReference type="jPOST" id="Q8VDQ1"/>
<dbReference type="PaxDb" id="10090-ENSMUSP00000115704"/>
<dbReference type="PeptideAtlas" id="Q8VDQ1"/>
<dbReference type="ProteomicsDB" id="302006">
    <molecule id="Q8VDQ1-1"/>
</dbReference>
<dbReference type="ProteomicsDB" id="302007">
    <molecule id="Q8VDQ1-2"/>
</dbReference>
<dbReference type="Pumba" id="Q8VDQ1"/>
<dbReference type="DNASU" id="77219"/>
<dbReference type="Ensembl" id="ENSMUST00000123614.8">
    <molecule id="Q8VDQ1-1"/>
    <property type="protein sequence ID" value="ENSMUSP00000115704.2"/>
    <property type="gene ID" value="ENSMUSG00000072946.13"/>
</dbReference>
<dbReference type="Ensembl" id="ENSMUST00000146377.8">
    <molecule id="Q8VDQ1-1"/>
    <property type="protein sequence ID" value="ENSMUSP00000119981.2"/>
    <property type="gene ID" value="ENSMUSG00000072946.13"/>
</dbReference>
<dbReference type="Ensembl" id="ENSMUST00000147363.8">
    <molecule id="Q8VDQ1-2"/>
    <property type="protein sequence ID" value="ENSMUSP00000114766.2"/>
    <property type="gene ID" value="ENSMUSG00000072946.13"/>
</dbReference>
<dbReference type="GeneID" id="77219"/>
<dbReference type="KEGG" id="mmu:77219"/>
<dbReference type="UCSC" id="uc007oep.2">
    <molecule id="Q8VDQ1-1"/>
    <property type="organism name" value="mouse"/>
</dbReference>
<dbReference type="AGR" id="MGI:1916372"/>
<dbReference type="CTD" id="145482"/>
<dbReference type="MGI" id="MGI:1916372">
    <property type="gene designation" value="Ptgr2"/>
</dbReference>
<dbReference type="VEuPathDB" id="HostDB:ENSMUSG00000072946"/>
<dbReference type="eggNOG" id="KOG1196">
    <property type="taxonomic scope" value="Eukaryota"/>
</dbReference>
<dbReference type="GeneTree" id="ENSGT00940000156793"/>
<dbReference type="InParanoid" id="Q8VDQ1"/>
<dbReference type="OMA" id="EEKCRYA"/>
<dbReference type="OrthoDB" id="809632at2759"/>
<dbReference type="PhylomeDB" id="Q8VDQ1"/>
<dbReference type="TreeFam" id="TF324201"/>
<dbReference type="BRENDA" id="1.3.1.48">
    <property type="organism ID" value="3474"/>
</dbReference>
<dbReference type="SABIO-RK" id="Q8VDQ1"/>
<dbReference type="BioGRID-ORCS" id="77219">
    <property type="hits" value="2 hits in 79 CRISPR screens"/>
</dbReference>
<dbReference type="ChiTaRS" id="Ptgr2">
    <property type="organism name" value="mouse"/>
</dbReference>
<dbReference type="EvolutionaryTrace" id="Q8VDQ1"/>
<dbReference type="PRO" id="PR:Q8VDQ1"/>
<dbReference type="Proteomes" id="UP000000589">
    <property type="component" value="Chromosome 12"/>
</dbReference>
<dbReference type="RNAct" id="Q8VDQ1">
    <property type="molecule type" value="protein"/>
</dbReference>
<dbReference type="Bgee" id="ENSMUSG00000072946">
    <property type="expression patterns" value="Expressed in interventricular septum and 248 other cell types or tissues"/>
</dbReference>
<dbReference type="ExpressionAtlas" id="Q8VDQ1">
    <property type="expression patterns" value="baseline and differential"/>
</dbReference>
<dbReference type="GO" id="GO:0005829">
    <property type="term" value="C:cytosol"/>
    <property type="evidence" value="ECO:0000304"/>
    <property type="project" value="Reactome"/>
</dbReference>
<dbReference type="GO" id="GO:0005739">
    <property type="term" value="C:mitochondrion"/>
    <property type="evidence" value="ECO:0007005"/>
    <property type="project" value="MGI"/>
</dbReference>
<dbReference type="GO" id="GO:0047522">
    <property type="term" value="F:15-oxoprostaglandin 13-oxidase [NAD(P)+] activity"/>
    <property type="evidence" value="ECO:0000250"/>
    <property type="project" value="UniProtKB"/>
</dbReference>
<dbReference type="GO" id="GO:0006693">
    <property type="term" value="P:prostaglandin metabolic process"/>
    <property type="evidence" value="ECO:0000250"/>
    <property type="project" value="UniProtKB"/>
</dbReference>
<dbReference type="CDD" id="cd08293">
    <property type="entry name" value="PTGR2"/>
    <property type="match status" value="1"/>
</dbReference>
<dbReference type="DisProt" id="DP02579"/>
<dbReference type="FunFam" id="3.40.50.720:FF:000121">
    <property type="entry name" value="Prostaglandin reductase 2"/>
    <property type="match status" value="1"/>
</dbReference>
<dbReference type="FunFam" id="3.90.180.10:FF:000019">
    <property type="entry name" value="Prostaglandin reductase 2"/>
    <property type="match status" value="1"/>
</dbReference>
<dbReference type="Gene3D" id="3.90.180.10">
    <property type="entry name" value="Medium-chain alcohol dehydrogenases, catalytic domain"/>
    <property type="match status" value="1"/>
</dbReference>
<dbReference type="Gene3D" id="3.40.50.720">
    <property type="entry name" value="NAD(P)-binding Rossmann-like Domain"/>
    <property type="match status" value="1"/>
</dbReference>
<dbReference type="InterPro" id="IPR013149">
    <property type="entry name" value="ADH-like_C"/>
</dbReference>
<dbReference type="InterPro" id="IPR041694">
    <property type="entry name" value="ADH_N_2"/>
</dbReference>
<dbReference type="InterPro" id="IPR011032">
    <property type="entry name" value="GroES-like_sf"/>
</dbReference>
<dbReference type="InterPro" id="IPR045010">
    <property type="entry name" value="MDR_fam"/>
</dbReference>
<dbReference type="InterPro" id="IPR036291">
    <property type="entry name" value="NAD(P)-bd_dom_sf"/>
</dbReference>
<dbReference type="InterPro" id="IPR037399">
    <property type="entry name" value="PTGR2"/>
</dbReference>
<dbReference type="PANTHER" id="PTHR43205">
    <property type="entry name" value="PROSTAGLANDIN REDUCTASE"/>
    <property type="match status" value="1"/>
</dbReference>
<dbReference type="PANTHER" id="PTHR43205:SF5">
    <property type="entry name" value="PROSTAGLANDIN REDUCTASE 2"/>
    <property type="match status" value="1"/>
</dbReference>
<dbReference type="Pfam" id="PF16884">
    <property type="entry name" value="ADH_N_2"/>
    <property type="match status" value="1"/>
</dbReference>
<dbReference type="Pfam" id="PF00107">
    <property type="entry name" value="ADH_zinc_N"/>
    <property type="match status" value="1"/>
</dbReference>
<dbReference type="SUPFAM" id="SSF50129">
    <property type="entry name" value="GroES-like"/>
    <property type="match status" value="1"/>
</dbReference>
<dbReference type="SUPFAM" id="SSF51735">
    <property type="entry name" value="NAD(P)-binding Rossmann-fold domains"/>
    <property type="match status" value="1"/>
</dbReference>
<evidence type="ECO:0000250" key="1"/>
<evidence type="ECO:0000269" key="2">
    <source>
    </source>
</evidence>
<evidence type="ECO:0000269" key="3">
    <source>
    </source>
</evidence>
<evidence type="ECO:0000269" key="4">
    <source>
    </source>
</evidence>
<evidence type="ECO:0000303" key="5">
    <source>
    </source>
</evidence>
<evidence type="ECO:0000305" key="6"/>
<evidence type="ECO:0000305" key="7">
    <source>
    </source>
</evidence>
<evidence type="ECO:0000312" key="8">
    <source>
        <dbReference type="MGI" id="MGI:1916372"/>
    </source>
</evidence>
<evidence type="ECO:0007829" key="9">
    <source>
        <dbReference type="PDB" id="1VJ1"/>
    </source>
</evidence>
<evidence type="ECO:0007829" key="10">
    <source>
        <dbReference type="PDB" id="2ZB3"/>
    </source>
</evidence>
<sequence>MIIQRVVLNSRPGKNGNPVAENFRVEEFSLPDALNEGQVQVRTLYLSVDPYMRCKMNEDTGTDYLAPWQLAQVADGGGIGVVEESKHQKLTKGDFVTSFYWPWQTKAILDGNGLEKVDPQLVDGHLSYFLGAIGMPGLTSLIGVQEKGHISAGSNQTMVVSGAAGACGSLAGQIGHLLGCSRVVGICGTQEKCLFLTSELGFDAAVNYKTGNVAEQLREACPGGVDVYFDNVGGDISNAVISQMNENSHIILCGQISQYSNDVPYPPPLPPAVEAIRKERNITRERFTVLNYKDKFEPGILQLSQWFKEGKLKVKETMAKGLENMGVAFQSMMTGGNVGKQIVCISEDSSL</sequence>
<gene>
    <name evidence="8" type="primary">Ptgr2</name>
    <name type="synonym">Zadh1</name>
</gene>
<protein>
    <recommendedName>
        <fullName evidence="6">Prostaglandin reductase 2</fullName>
        <shortName>PRG-2</shortName>
        <ecNumber evidence="3">1.3.1.48</ecNumber>
    </recommendedName>
    <alternativeName>
        <fullName>15-oxoprostaglandin 13-reductase</fullName>
    </alternativeName>
    <alternativeName>
        <fullName>Zinc-binding alcohol dehydrogenase domain-containing protein 1</fullName>
    </alternativeName>
</protein>
<accession>Q8VDQ1</accession>
<accession>Q3TG36</accession>
<accession>Q3ULY3</accession>
<accession>Q8BZA2</accession>
<accession>Q9D1W8</accession>
<reference key="1">
    <citation type="journal article" date="2005" name="Science">
        <title>The transcriptional landscape of the mammalian genome.</title>
        <authorList>
            <person name="Carninci P."/>
            <person name="Kasukawa T."/>
            <person name="Katayama S."/>
            <person name="Gough J."/>
            <person name="Frith M.C."/>
            <person name="Maeda N."/>
            <person name="Oyama R."/>
            <person name="Ravasi T."/>
            <person name="Lenhard B."/>
            <person name="Wells C."/>
            <person name="Kodzius R."/>
            <person name="Shimokawa K."/>
            <person name="Bajic V.B."/>
            <person name="Brenner S.E."/>
            <person name="Batalov S."/>
            <person name="Forrest A.R."/>
            <person name="Zavolan M."/>
            <person name="Davis M.J."/>
            <person name="Wilming L.G."/>
            <person name="Aidinis V."/>
            <person name="Allen J.E."/>
            <person name="Ambesi-Impiombato A."/>
            <person name="Apweiler R."/>
            <person name="Aturaliya R.N."/>
            <person name="Bailey T.L."/>
            <person name="Bansal M."/>
            <person name="Baxter L."/>
            <person name="Beisel K.W."/>
            <person name="Bersano T."/>
            <person name="Bono H."/>
            <person name="Chalk A.M."/>
            <person name="Chiu K.P."/>
            <person name="Choudhary V."/>
            <person name="Christoffels A."/>
            <person name="Clutterbuck D.R."/>
            <person name="Crowe M.L."/>
            <person name="Dalla E."/>
            <person name="Dalrymple B.P."/>
            <person name="de Bono B."/>
            <person name="Della Gatta G."/>
            <person name="di Bernardo D."/>
            <person name="Down T."/>
            <person name="Engstrom P."/>
            <person name="Fagiolini M."/>
            <person name="Faulkner G."/>
            <person name="Fletcher C.F."/>
            <person name="Fukushima T."/>
            <person name="Furuno M."/>
            <person name="Futaki S."/>
            <person name="Gariboldi M."/>
            <person name="Georgii-Hemming P."/>
            <person name="Gingeras T.R."/>
            <person name="Gojobori T."/>
            <person name="Green R.E."/>
            <person name="Gustincich S."/>
            <person name="Harbers M."/>
            <person name="Hayashi Y."/>
            <person name="Hensch T.K."/>
            <person name="Hirokawa N."/>
            <person name="Hill D."/>
            <person name="Huminiecki L."/>
            <person name="Iacono M."/>
            <person name="Ikeo K."/>
            <person name="Iwama A."/>
            <person name="Ishikawa T."/>
            <person name="Jakt M."/>
            <person name="Kanapin A."/>
            <person name="Katoh M."/>
            <person name="Kawasawa Y."/>
            <person name="Kelso J."/>
            <person name="Kitamura H."/>
            <person name="Kitano H."/>
            <person name="Kollias G."/>
            <person name="Krishnan S.P."/>
            <person name="Kruger A."/>
            <person name="Kummerfeld S.K."/>
            <person name="Kurochkin I.V."/>
            <person name="Lareau L.F."/>
            <person name="Lazarevic D."/>
            <person name="Lipovich L."/>
            <person name="Liu J."/>
            <person name="Liuni S."/>
            <person name="McWilliam S."/>
            <person name="Madan Babu M."/>
            <person name="Madera M."/>
            <person name="Marchionni L."/>
            <person name="Matsuda H."/>
            <person name="Matsuzawa S."/>
            <person name="Miki H."/>
            <person name="Mignone F."/>
            <person name="Miyake S."/>
            <person name="Morris K."/>
            <person name="Mottagui-Tabar S."/>
            <person name="Mulder N."/>
            <person name="Nakano N."/>
            <person name="Nakauchi H."/>
            <person name="Ng P."/>
            <person name="Nilsson R."/>
            <person name="Nishiguchi S."/>
            <person name="Nishikawa S."/>
            <person name="Nori F."/>
            <person name="Ohara O."/>
            <person name="Okazaki Y."/>
            <person name="Orlando V."/>
            <person name="Pang K.C."/>
            <person name="Pavan W.J."/>
            <person name="Pavesi G."/>
            <person name="Pesole G."/>
            <person name="Petrovsky N."/>
            <person name="Piazza S."/>
            <person name="Reed J."/>
            <person name="Reid J.F."/>
            <person name="Ring B.Z."/>
            <person name="Ringwald M."/>
            <person name="Rost B."/>
            <person name="Ruan Y."/>
            <person name="Salzberg S.L."/>
            <person name="Sandelin A."/>
            <person name="Schneider C."/>
            <person name="Schoenbach C."/>
            <person name="Sekiguchi K."/>
            <person name="Semple C.A."/>
            <person name="Seno S."/>
            <person name="Sessa L."/>
            <person name="Sheng Y."/>
            <person name="Shibata Y."/>
            <person name="Shimada H."/>
            <person name="Shimada K."/>
            <person name="Silva D."/>
            <person name="Sinclair B."/>
            <person name="Sperling S."/>
            <person name="Stupka E."/>
            <person name="Sugiura K."/>
            <person name="Sultana R."/>
            <person name="Takenaka Y."/>
            <person name="Taki K."/>
            <person name="Tammoja K."/>
            <person name="Tan S.L."/>
            <person name="Tang S."/>
            <person name="Taylor M.S."/>
            <person name="Tegner J."/>
            <person name="Teichmann S.A."/>
            <person name="Ueda H.R."/>
            <person name="van Nimwegen E."/>
            <person name="Verardo R."/>
            <person name="Wei C.L."/>
            <person name="Yagi K."/>
            <person name="Yamanishi H."/>
            <person name="Zabarovsky E."/>
            <person name="Zhu S."/>
            <person name="Zimmer A."/>
            <person name="Hide W."/>
            <person name="Bult C."/>
            <person name="Grimmond S.M."/>
            <person name="Teasdale R.D."/>
            <person name="Liu E.T."/>
            <person name="Brusic V."/>
            <person name="Quackenbush J."/>
            <person name="Wahlestedt C."/>
            <person name="Mattick J.S."/>
            <person name="Hume D.A."/>
            <person name="Kai C."/>
            <person name="Sasaki D."/>
            <person name="Tomaru Y."/>
            <person name="Fukuda S."/>
            <person name="Kanamori-Katayama M."/>
            <person name="Suzuki M."/>
            <person name="Aoki J."/>
            <person name="Arakawa T."/>
            <person name="Iida J."/>
            <person name="Imamura K."/>
            <person name="Itoh M."/>
            <person name="Kato T."/>
            <person name="Kawaji H."/>
            <person name="Kawagashira N."/>
            <person name="Kawashima T."/>
            <person name="Kojima M."/>
            <person name="Kondo S."/>
            <person name="Konno H."/>
            <person name="Nakano K."/>
            <person name="Ninomiya N."/>
            <person name="Nishio T."/>
            <person name="Okada M."/>
            <person name="Plessy C."/>
            <person name="Shibata K."/>
            <person name="Shiraki T."/>
            <person name="Suzuki S."/>
            <person name="Tagami M."/>
            <person name="Waki K."/>
            <person name="Watahiki A."/>
            <person name="Okamura-Oho Y."/>
            <person name="Suzuki H."/>
            <person name="Kawai J."/>
            <person name="Hayashizaki Y."/>
        </authorList>
    </citation>
    <scope>NUCLEOTIDE SEQUENCE [LARGE SCALE MRNA] (ISOFORMS 1 AND 2)</scope>
    <source>
        <strain>C57BL/6J</strain>
        <tissue>Cerebellum</tissue>
        <tissue>Embryonic heart</tissue>
        <tissue>Mammary gland</tissue>
        <tissue>Medulla oblongata</tissue>
    </source>
</reference>
<reference key="2">
    <citation type="journal article" date="2004" name="Genome Res.">
        <title>The status, quality, and expansion of the NIH full-length cDNA project: the Mammalian Gene Collection (MGC).</title>
        <authorList>
            <consortium name="The MGC Project Team"/>
        </authorList>
    </citation>
    <scope>NUCLEOTIDE SEQUENCE [LARGE SCALE MRNA] (ISOFORM 1)</scope>
    <source>
        <strain>Czech II</strain>
        <tissue>Mammary tumor</tissue>
    </source>
</reference>
<reference key="3">
    <citation type="journal article" date="2007" name="J. Biol. Chem.">
        <title>Identification of a novel prostaglandin reductase reveals the involvement of prostaglandin E2 catabolism in regulation of peroxisome proliferator-activated receptor gamma activation.</title>
        <authorList>
            <person name="Chou W.-L."/>
            <person name="Chuang L.-M."/>
            <person name="Chou C.-C."/>
            <person name="Wang A.H.-J."/>
            <person name="Lawson J.A."/>
            <person name="FitzGerald G.A."/>
            <person name="Chang Z.-F."/>
        </authorList>
    </citation>
    <scope>FUNCTION</scope>
    <scope>CATALYTIC ACTIVITY</scope>
    <scope>BIOPHYSICOCHEMICAL PROPERTIES</scope>
    <scope>TISSUE SPECIFICITY</scope>
    <scope>DEVELOPMENTAL STAGE</scope>
    <scope>MUTAGENESIS OF TYR-259</scope>
</reference>
<reference key="4">
    <citation type="journal article" date="2010" name="Cell">
        <title>A tissue-specific atlas of mouse protein phosphorylation and expression.</title>
        <authorList>
            <person name="Huttlin E.L."/>
            <person name="Jedrychowski M.P."/>
            <person name="Elias J.E."/>
            <person name="Goswami T."/>
            <person name="Rad R."/>
            <person name="Beausoleil S.A."/>
            <person name="Villen J."/>
            <person name="Haas W."/>
            <person name="Sowa M.E."/>
            <person name="Gygi S.P."/>
        </authorList>
    </citation>
    <scope>IDENTIFICATION BY MASS SPECTROMETRY [LARGE SCALE ANALYSIS]</scope>
    <source>
        <tissue>Brain</tissue>
        <tissue>Brown adipose tissue</tissue>
        <tissue>Heart</tissue>
        <tissue>Kidney</tissue>
        <tissue>Liver</tissue>
        <tissue>Lung</tissue>
        <tissue>Pancreas</tissue>
        <tissue>Spleen</tissue>
        <tissue>Testis</tissue>
    </source>
</reference>
<reference key="5">
    <citation type="journal article" date="2004" name="Proteins">
        <title>Crystal structure of a putative NADPH-dependent oxidoreductase (GI: 18204011) from mouse at 2.10 A resolution.</title>
        <authorList>
            <person name="Levin I."/>
            <person name="Schwarzenbacher R."/>
            <person name="McMullan D."/>
            <person name="Abdubek P."/>
            <person name="Ambing E."/>
            <person name="Biorac T."/>
            <person name="Cambell J."/>
            <person name="Canaves J.M."/>
            <person name="Chiu H.-J."/>
            <person name="Dai X."/>
            <person name="Deacon A.M."/>
            <person name="DiDonato M."/>
            <person name="Elsliger M.-A."/>
            <person name="Godzik A."/>
            <person name="Grittini C."/>
            <person name="Grzechnik S.K."/>
            <person name="Hampton E."/>
            <person name="Jaroszewski L."/>
            <person name="Karlak C."/>
            <person name="Klock H.E."/>
            <person name="Koesema E."/>
            <person name="Kreusch A."/>
            <person name="Kuhn P."/>
            <person name="Lesley S.A."/>
            <person name="McPhillips T.M."/>
            <person name="Miller M.D."/>
            <person name="Morse A."/>
            <person name="Moy K."/>
            <person name="Ouyang J."/>
            <person name="Page R."/>
            <person name="Quijano K."/>
            <person name="Reyes R."/>
            <person name="Robb A."/>
            <person name="Sims E."/>
            <person name="Spraggon G."/>
            <person name="Stevens R.C."/>
            <person name="van den Bedem H."/>
            <person name="Velasquez J."/>
            <person name="Vincent J."/>
            <person name="von Delft F."/>
            <person name="Wang X."/>
            <person name="West B."/>
            <person name="Wolf G."/>
            <person name="Xu Q."/>
            <person name="Hodgson K.O."/>
            <person name="Wooley J."/>
            <person name="Wilson I.A."/>
        </authorList>
    </citation>
    <scope>X-RAY CRYSTALLOGRAPHY (2.1 ANGSTROMS)</scope>
    <scope>SUBUNIT</scope>
</reference>
<reference key="6">
    <citation type="journal article" date="2008" name="Structure">
        <title>Structural basis for catalytic and inhibitory mechanisms of human prostaglandin reductase PTGR2.</title>
        <authorList>
            <person name="Wu Y.H."/>
            <person name="Ko T.P."/>
            <person name="Guo R.T."/>
            <person name="Hu S.M."/>
            <person name="Chuang L.M."/>
            <person name="Wang A.H."/>
        </authorList>
    </citation>
    <scope>X-RAY CRYSTALLOGRAPHY (2.0 ANGSTROMS) IN COMPLEX WITH NADPH</scope>
</reference>
<comment type="function">
    <text evidence="3">Functions as 15-oxo-prostaglandin 13-reductase and acts on 15-keto-PGE1, 15-keto-PGE2, 15-keto-PGE1-alpha and 15-keto-PGE2-alpha with highest activity towards 15-keto-PGE2. Overexpression represses transcriptional activity of PPARG and inhibits adipocyte differentiation.</text>
</comment>
<comment type="catalytic activity">
    <reaction evidence="3">
        <text>13,14-dihydro-15-oxo-prostaglandin E2 + NAD(+) = 15-oxoprostaglandin E2 + NADH + H(+)</text>
        <dbReference type="Rhea" id="RHEA:11916"/>
        <dbReference type="ChEBI" id="CHEBI:15378"/>
        <dbReference type="ChEBI" id="CHEBI:57400"/>
        <dbReference type="ChEBI" id="CHEBI:57402"/>
        <dbReference type="ChEBI" id="CHEBI:57540"/>
        <dbReference type="ChEBI" id="CHEBI:57945"/>
        <dbReference type="EC" id="1.3.1.48"/>
    </reaction>
    <physiologicalReaction direction="right-to-left" evidence="7">
        <dbReference type="Rhea" id="RHEA:11918"/>
    </physiologicalReaction>
</comment>
<comment type="catalytic activity">
    <reaction evidence="3">
        <text>13,14-dihydro-15-oxo-prostaglandin E2 + NADP(+) = 15-oxoprostaglandin E2 + NADPH + H(+)</text>
        <dbReference type="Rhea" id="RHEA:11912"/>
        <dbReference type="ChEBI" id="CHEBI:15378"/>
        <dbReference type="ChEBI" id="CHEBI:57400"/>
        <dbReference type="ChEBI" id="CHEBI:57402"/>
        <dbReference type="ChEBI" id="CHEBI:57783"/>
        <dbReference type="ChEBI" id="CHEBI:58349"/>
        <dbReference type="EC" id="1.3.1.48"/>
    </reaction>
    <physiologicalReaction direction="right-to-left" evidence="7">
        <dbReference type="Rhea" id="RHEA:11914"/>
    </physiologicalReaction>
</comment>
<comment type="catalytic activity">
    <reaction evidence="3">
        <text>13,14-dihydro-15-oxo-PGF2alpha + NADP(+) = 15-oxoprostaglandin F2alpha + NADPH + H(+)</text>
        <dbReference type="Rhea" id="RHEA:50588"/>
        <dbReference type="ChEBI" id="CHEBI:15378"/>
        <dbReference type="ChEBI" id="CHEBI:57783"/>
        <dbReference type="ChEBI" id="CHEBI:58349"/>
        <dbReference type="ChEBI" id="CHEBI:133374"/>
        <dbReference type="ChEBI" id="CHEBI:133409"/>
    </reaction>
    <physiologicalReaction direction="right-to-left" evidence="7">
        <dbReference type="Rhea" id="RHEA:50590"/>
    </physiologicalReaction>
</comment>
<comment type="catalytic activity">
    <reaction evidence="3">
        <text>13,14-dihydro-15-oxo-prostaglandin E1 + NADP(+) = 15-oxoprostaglandin E1 + NADPH + H(+)</text>
        <dbReference type="Rhea" id="RHEA:50584"/>
        <dbReference type="ChEBI" id="CHEBI:15378"/>
        <dbReference type="ChEBI" id="CHEBI:57401"/>
        <dbReference type="ChEBI" id="CHEBI:57783"/>
        <dbReference type="ChEBI" id="CHEBI:58349"/>
        <dbReference type="ChEBI" id="CHEBI:133408"/>
    </reaction>
    <physiologicalReaction direction="right-to-left" evidence="7">
        <dbReference type="Rhea" id="RHEA:50586"/>
    </physiologicalReaction>
</comment>
<comment type="catalytic activity">
    <reaction evidence="3">
        <text>13,14-dihydro-15-oxo-prostaglandin F1alpha + NADP(+) = 15-oxoprostaglandin F1alpha + NADPH + H(+)</text>
        <dbReference type="Rhea" id="RHEA:50592"/>
        <dbReference type="ChEBI" id="CHEBI:15378"/>
        <dbReference type="ChEBI" id="CHEBI:57783"/>
        <dbReference type="ChEBI" id="CHEBI:58349"/>
        <dbReference type="ChEBI" id="CHEBI:79072"/>
        <dbReference type="ChEBI" id="CHEBI:133411"/>
    </reaction>
    <physiologicalReaction direction="right-to-left" evidence="7">
        <dbReference type="Rhea" id="RHEA:50594"/>
    </physiologicalReaction>
</comment>
<comment type="biophysicochemical properties">
    <kinetics>
        <KM evidence="3">49.6 uM for 15-keto-PGE2</KM>
        <KM evidence="3">34.4 uM for 15-keto-PGE1</KM>
        <KM evidence="3">108.8 uM for 15-keto-PGF2-alpha</KM>
        <KM evidence="3">59.2 uM for 15-keto-PGF2-beta</KM>
        <KM evidence="3">94.6 uM for NADPH</KM>
        <Vmax evidence="3">178.4 umol/min/mg enzyme for 15-keto-PGE2</Vmax>
        <Vmax evidence="3">115.0 umol/min/mg enzyme for 15-keto-PGE1</Vmax>
        <Vmax evidence="3">230.9 umol/min/mg enzyme for 15-keto-PGF2-alpha</Vmax>
        <Vmax evidence="3">206.4 umol/min/mg enzyme for 15-keto-PGF2-beta</Vmax>
        <Vmax evidence="3">144.7 umol/min/mg enzyme for NADPH</Vmax>
    </kinetics>
</comment>
<comment type="subunit">
    <text evidence="2 4">Monomer.</text>
</comment>
<comment type="subcellular location">
    <subcellularLocation>
        <location evidence="1">Cytoplasm</location>
    </subcellularLocation>
</comment>
<comment type="alternative products">
    <event type="alternative splicing"/>
    <isoform>
        <id>Q8VDQ1-1</id>
        <name>1</name>
        <sequence type="displayed"/>
    </isoform>
    <isoform>
        <id>Q8VDQ1-2</id>
        <name>2</name>
        <sequence type="described" ref="VSP_013528 VSP_013529"/>
    </isoform>
</comment>
<comment type="tissue specificity">
    <text evidence="3">Widely expressed with highest levels in adipose tissues.</text>
</comment>
<comment type="developmental stage">
    <text evidence="3">Highly expressed in the late phase of adipocyte differentiation (at protein level).</text>
</comment>
<comment type="similarity">
    <text evidence="6">Belongs to the NADP-dependent oxidoreductase L4BD family.</text>
</comment>
<feature type="chain" id="PRO_0000218071" description="Prostaglandin reductase 2">
    <location>
        <begin position="1"/>
        <end position="351"/>
    </location>
</feature>
<feature type="binding site" evidence="1">
    <location>
        <begin position="99"/>
        <end position="100"/>
    </location>
    <ligand>
        <name>substrate</name>
    </ligand>
</feature>
<feature type="binding site" evidence="4">
    <location>
        <begin position="165"/>
        <end position="168"/>
    </location>
    <ligand>
        <name>NADP(+)</name>
        <dbReference type="ChEBI" id="CHEBI:58349"/>
    </ligand>
</feature>
<feature type="binding site" evidence="4">
    <location>
        <position position="192"/>
    </location>
    <ligand>
        <name>NADP(+)</name>
        <dbReference type="ChEBI" id="CHEBI:58349"/>
    </ligand>
</feature>
<feature type="binding site" evidence="4">
    <location>
        <position position="208"/>
    </location>
    <ligand>
        <name>NADP(+)</name>
        <dbReference type="ChEBI" id="CHEBI:58349"/>
    </ligand>
</feature>
<feature type="binding site" evidence="4">
    <location>
        <position position="231"/>
    </location>
    <ligand>
        <name>NADP(+)</name>
        <dbReference type="ChEBI" id="CHEBI:58349"/>
    </ligand>
</feature>
<feature type="binding site" evidence="4">
    <location>
        <begin position="253"/>
        <end position="259"/>
    </location>
    <ligand>
        <name>NADP(+)</name>
        <dbReference type="ChEBI" id="CHEBI:58349"/>
    </ligand>
</feature>
<feature type="binding site" evidence="4">
    <location>
        <begin position="287"/>
        <end position="289"/>
    </location>
    <ligand>
        <name>NADP(+)</name>
        <dbReference type="ChEBI" id="CHEBI:58349"/>
    </ligand>
</feature>
<feature type="binding site" evidence="1">
    <location>
        <begin position="288"/>
        <end position="290"/>
    </location>
    <ligand>
        <name>substrate</name>
    </ligand>
</feature>
<feature type="binding site" evidence="4">
    <location>
        <position position="337"/>
    </location>
    <ligand>
        <name>NADP(+)</name>
        <dbReference type="ChEBI" id="CHEBI:58349"/>
    </ligand>
</feature>
<feature type="splice variant" id="VSP_013528" description="In isoform 2." evidence="5">
    <original>VKE</original>
    <variation>FLF</variation>
    <location>
        <begin position="314"/>
        <end position="316"/>
    </location>
</feature>
<feature type="splice variant" id="VSP_013529" description="In isoform 2." evidence="5">
    <location>
        <begin position="317"/>
        <end position="351"/>
    </location>
</feature>
<feature type="mutagenesis site" description="Significant reduction in catalytic efficiency." evidence="3">
    <original>Y</original>
    <variation>F</variation>
    <location>
        <position position="259"/>
    </location>
</feature>
<feature type="sequence conflict" description="In Ref. 1; BAB32284." evidence="6" ref="1">
    <original>P</original>
    <variation>T</variation>
    <location>
        <position position="18"/>
    </location>
</feature>
<feature type="sequence conflict" description="In Ref. 2; AAH21466." evidence="6" ref="2">
    <original>P</original>
    <variation>L</variation>
    <location>
        <position position="31"/>
    </location>
</feature>
<feature type="sequence conflict" description="In Ref. 1; BAE26315 and 2; AAH21466." evidence="6" ref="1 2">
    <original>V</original>
    <variation>I</variation>
    <location>
        <position position="81"/>
    </location>
</feature>
<feature type="sequence conflict" description="In Ref. 1; BAE26315 and 2; AAH21466." evidence="6" ref="1 2">
    <original>T</original>
    <variation>A</variation>
    <location>
        <position position="91"/>
    </location>
</feature>
<feature type="sequence conflict" description="In Ref. 1; BAE26315 and 2; AAH21466." evidence="6" ref="1 2">
    <original>A</original>
    <variation>T</variation>
    <location>
        <position position="239"/>
    </location>
</feature>
<feature type="sequence conflict" description="In Ref. 1; BAE26315 and 2; AAH21466." evidence="6" ref="1 2">
    <original>SN</original>
    <variation>NK</variation>
    <location>
        <begin position="260"/>
        <end position="261"/>
    </location>
</feature>
<feature type="sequence conflict" description="In Ref. 1; BAE26315 and 2; AAH21466." evidence="6" ref="1 2">
    <original>M</original>
    <variation>V</variation>
    <location>
        <position position="318"/>
    </location>
</feature>
<feature type="strand" evidence="10">
    <location>
        <begin position="3"/>
        <end position="8"/>
    </location>
</feature>
<feature type="helix" evidence="10">
    <location>
        <begin position="20"/>
        <end position="22"/>
    </location>
</feature>
<feature type="strand" evidence="10">
    <location>
        <begin position="23"/>
        <end position="28"/>
    </location>
</feature>
<feature type="strand" evidence="10">
    <location>
        <begin position="38"/>
        <end position="47"/>
    </location>
</feature>
<feature type="helix" evidence="10">
    <location>
        <begin position="51"/>
        <end position="55"/>
    </location>
</feature>
<feature type="strand" evidence="10">
    <location>
        <begin position="57"/>
        <end position="59"/>
    </location>
</feature>
<feature type="strand" evidence="10">
    <location>
        <begin position="75"/>
        <end position="85"/>
    </location>
</feature>
<feature type="strand" evidence="10">
    <location>
        <begin position="95"/>
        <end position="110"/>
    </location>
</feature>
<feature type="helix" evidence="10">
    <location>
        <begin position="111"/>
        <end position="113"/>
    </location>
</feature>
<feature type="strand" evidence="9">
    <location>
        <begin position="115"/>
        <end position="117"/>
    </location>
</feature>
<feature type="helix" evidence="10">
    <location>
        <begin position="119"/>
        <end position="122"/>
    </location>
</feature>
<feature type="helix" evidence="10">
    <location>
        <begin position="126"/>
        <end position="130"/>
    </location>
</feature>
<feature type="turn" evidence="10">
    <location>
        <begin position="131"/>
        <end position="133"/>
    </location>
</feature>
<feature type="helix" evidence="10">
    <location>
        <begin position="135"/>
        <end position="147"/>
    </location>
</feature>
<feature type="strand" evidence="10">
    <location>
        <begin position="157"/>
        <end position="162"/>
    </location>
</feature>
<feature type="helix" evidence="10">
    <location>
        <begin position="166"/>
        <end position="177"/>
    </location>
</feature>
<feature type="strand" evidence="10">
    <location>
        <begin position="181"/>
        <end position="189"/>
    </location>
</feature>
<feature type="helix" evidence="10">
    <location>
        <begin position="190"/>
        <end position="198"/>
    </location>
</feature>
<feature type="strand" evidence="10">
    <location>
        <begin position="203"/>
        <end position="207"/>
    </location>
</feature>
<feature type="helix" evidence="10">
    <location>
        <begin position="208"/>
        <end position="210"/>
    </location>
</feature>
<feature type="helix" evidence="10">
    <location>
        <begin position="213"/>
        <end position="220"/>
    </location>
</feature>
<feature type="strand" evidence="10">
    <location>
        <begin position="225"/>
        <end position="232"/>
    </location>
</feature>
<feature type="helix" evidence="10">
    <location>
        <begin position="234"/>
        <end position="242"/>
    </location>
</feature>
<feature type="strand" evidence="10">
    <location>
        <begin position="244"/>
        <end position="252"/>
    </location>
</feature>
<feature type="helix" evidence="10">
    <location>
        <begin position="256"/>
        <end position="258"/>
    </location>
</feature>
<feature type="helix" evidence="10">
    <location>
        <begin position="271"/>
        <end position="280"/>
    </location>
</feature>
<feature type="strand" evidence="10">
    <location>
        <begin position="283"/>
        <end position="286"/>
    </location>
</feature>
<feature type="helix" evidence="10">
    <location>
        <begin position="289"/>
        <end position="291"/>
    </location>
</feature>
<feature type="helix" evidence="10">
    <location>
        <begin position="293"/>
        <end position="295"/>
    </location>
</feature>
<feature type="helix" evidence="10">
    <location>
        <begin position="296"/>
        <end position="308"/>
    </location>
</feature>
<feature type="strand" evidence="10">
    <location>
        <begin position="316"/>
        <end position="320"/>
    </location>
</feature>
<feature type="helix" evidence="10">
    <location>
        <begin position="322"/>
        <end position="324"/>
    </location>
</feature>
<feature type="helix" evidence="10">
    <location>
        <begin position="325"/>
        <end position="333"/>
    </location>
</feature>
<feature type="strand" evidence="10">
    <location>
        <begin position="338"/>
        <end position="344"/>
    </location>
</feature>
<keyword id="KW-0002">3D-structure</keyword>
<keyword id="KW-0025">Alternative splicing</keyword>
<keyword id="KW-0963">Cytoplasm</keyword>
<keyword id="KW-0443">Lipid metabolism</keyword>
<keyword id="KW-0521">NADP</keyword>
<keyword id="KW-0560">Oxidoreductase</keyword>
<keyword id="KW-1185">Reference proteome</keyword>
<name>PTGR2_MOUSE</name>
<organism>
    <name type="scientific">Mus musculus</name>
    <name type="common">Mouse</name>
    <dbReference type="NCBI Taxonomy" id="10090"/>
    <lineage>
        <taxon>Eukaryota</taxon>
        <taxon>Metazoa</taxon>
        <taxon>Chordata</taxon>
        <taxon>Craniata</taxon>
        <taxon>Vertebrata</taxon>
        <taxon>Euteleostomi</taxon>
        <taxon>Mammalia</taxon>
        <taxon>Eutheria</taxon>
        <taxon>Euarchontoglires</taxon>
        <taxon>Glires</taxon>
        <taxon>Rodentia</taxon>
        <taxon>Myomorpha</taxon>
        <taxon>Muroidea</taxon>
        <taxon>Muridae</taxon>
        <taxon>Murinae</taxon>
        <taxon>Mus</taxon>
        <taxon>Mus</taxon>
    </lineage>
</organism>
<proteinExistence type="evidence at protein level"/>